<name>EGFL6_XENLA</name>
<sequence length="544" mass="61048">MAITGGMQSSDMVLLLWITVICACCSFVDSSRSHRQLITSPSTTGVCRYGIKAECCYGWKRNRKGQCEAVCEQGCKHGECVGPNKCKCFPGFTGKNCNQDLNECGLKPRPCEHRCMNTHGSYKCYCLNGYMLMPDGSCSNSRTCAMANCQYGCEQVKGDIRCLCPSGGLQLGPDGRTCIDIDECAVGKASCPINRRCVNTFGSYYCKCQIGYELKYVNGRYDCIDINECLLNTHKCSINADCLNTQGSFKCRCKHGFKGNGQECSAVFNKPVKESPKFGGSVKDAIKKLLAHKNSLNRYNDIKNVIPETFITPPPKNRLQPFDYEDGVYIGGNDNDEEEGEIEEEEEEELDEEDEENVIEEEKLLRGDVFARQVKRAAVLSSQPISNTDPVLKSDEVLVDCRFDQGTCEWKQDSKDDFDWKHAERHNGNGYYMSVPASTSQKKGIGRLKLQLTKIYYKYCLMFIYRLAGERVGKLRVYIDENINPIWEETKNRDEGWRTAKIEIQESSTRKSSSITFEAVRGKDEAGIMALDNVFLSSGPCSDD</sequence>
<gene>
    <name type="primary">egfl6</name>
</gene>
<comment type="function">
    <text evidence="1">May play a role in organ morphogenesis. Promotes matrix assembly (By similarity).</text>
</comment>
<comment type="subcellular location">
    <subcellularLocation>
        <location evidence="1">Secreted</location>
        <location evidence="1">Extracellular space</location>
        <location evidence="1">Extracellular matrix</location>
        <location evidence="1">Basement membrane</location>
    </subcellularLocation>
</comment>
<comment type="similarity">
    <text evidence="6">Belongs to the nephronectin family.</text>
</comment>
<proteinExistence type="evidence at transcript level"/>
<organism>
    <name type="scientific">Xenopus laevis</name>
    <name type="common">African clawed frog</name>
    <dbReference type="NCBI Taxonomy" id="8355"/>
    <lineage>
        <taxon>Eukaryota</taxon>
        <taxon>Metazoa</taxon>
        <taxon>Chordata</taxon>
        <taxon>Craniata</taxon>
        <taxon>Vertebrata</taxon>
        <taxon>Euteleostomi</taxon>
        <taxon>Amphibia</taxon>
        <taxon>Batrachia</taxon>
        <taxon>Anura</taxon>
        <taxon>Pipoidea</taxon>
        <taxon>Pipidae</taxon>
        <taxon>Xenopodinae</taxon>
        <taxon>Xenopus</taxon>
        <taxon>Xenopus</taxon>
    </lineage>
</organism>
<reference key="1">
    <citation type="submission" date="2003-01" db="EMBL/GenBank/DDBJ databases">
        <authorList>
            <consortium name="NIH - Xenopus Gene Collection (XGC) project"/>
        </authorList>
    </citation>
    <scope>NUCLEOTIDE SEQUENCE [LARGE SCALE MRNA]</scope>
    <source>
        <tissue>Embryo</tissue>
    </source>
</reference>
<dbReference type="EMBL" id="BC042275">
    <property type="protein sequence ID" value="AAH42275.1"/>
    <property type="molecule type" value="mRNA"/>
</dbReference>
<dbReference type="RefSeq" id="NP_001080354.1">
    <property type="nucleotide sequence ID" value="NM_001086885.1"/>
</dbReference>
<dbReference type="SMR" id="Q8AVH7"/>
<dbReference type="DNASU" id="380046"/>
<dbReference type="GeneID" id="380046"/>
<dbReference type="KEGG" id="xla:380046"/>
<dbReference type="AGR" id="Xenbase:XB-GENE-983967"/>
<dbReference type="CTD" id="380046"/>
<dbReference type="Xenbase" id="XB-GENE-983967">
    <property type="gene designation" value="egfl6.S"/>
</dbReference>
<dbReference type="OrthoDB" id="10060424at2759"/>
<dbReference type="Proteomes" id="UP000186698">
    <property type="component" value="Chromosome 2S"/>
</dbReference>
<dbReference type="Bgee" id="380046">
    <property type="expression patterns" value="Expressed in lung and 8 other cell types or tissues"/>
</dbReference>
<dbReference type="GO" id="GO:0005604">
    <property type="term" value="C:basement membrane"/>
    <property type="evidence" value="ECO:0007669"/>
    <property type="project" value="UniProtKB-SubCell"/>
</dbReference>
<dbReference type="GO" id="GO:0005576">
    <property type="term" value="C:extracellular region"/>
    <property type="evidence" value="ECO:0007669"/>
    <property type="project" value="UniProtKB-KW"/>
</dbReference>
<dbReference type="GO" id="GO:0016020">
    <property type="term" value="C:membrane"/>
    <property type="evidence" value="ECO:0007669"/>
    <property type="project" value="InterPro"/>
</dbReference>
<dbReference type="GO" id="GO:0005509">
    <property type="term" value="F:calcium ion binding"/>
    <property type="evidence" value="ECO:0007669"/>
    <property type="project" value="InterPro"/>
</dbReference>
<dbReference type="GO" id="GO:0007155">
    <property type="term" value="P:cell adhesion"/>
    <property type="evidence" value="ECO:0007669"/>
    <property type="project" value="UniProtKB-KW"/>
</dbReference>
<dbReference type="GO" id="GO:0030154">
    <property type="term" value="P:cell differentiation"/>
    <property type="evidence" value="ECO:0007669"/>
    <property type="project" value="UniProtKB-KW"/>
</dbReference>
<dbReference type="CDD" id="cd00054">
    <property type="entry name" value="EGF_CA"/>
    <property type="match status" value="2"/>
</dbReference>
<dbReference type="CDD" id="cd06263">
    <property type="entry name" value="MAM"/>
    <property type="match status" value="1"/>
</dbReference>
<dbReference type="FunFam" id="2.10.25.10:FF:000187">
    <property type="entry name" value="nephronectin isoform X1"/>
    <property type="match status" value="1"/>
</dbReference>
<dbReference type="FunFam" id="2.10.25.10:FF:000476">
    <property type="entry name" value="nephronectin isoform X1"/>
    <property type="match status" value="1"/>
</dbReference>
<dbReference type="FunFam" id="2.10.25.10:FF:000653">
    <property type="entry name" value="Putative Fibrillin-1"/>
    <property type="match status" value="1"/>
</dbReference>
<dbReference type="Gene3D" id="2.60.120.200">
    <property type="match status" value="1"/>
</dbReference>
<dbReference type="Gene3D" id="2.10.25.10">
    <property type="entry name" value="Laminin"/>
    <property type="match status" value="5"/>
</dbReference>
<dbReference type="InterPro" id="IPR013320">
    <property type="entry name" value="ConA-like_dom_sf"/>
</dbReference>
<dbReference type="InterPro" id="IPR001881">
    <property type="entry name" value="EGF-like_Ca-bd_dom"/>
</dbReference>
<dbReference type="InterPro" id="IPR000742">
    <property type="entry name" value="EGF-like_dom"/>
</dbReference>
<dbReference type="InterPro" id="IPR000152">
    <property type="entry name" value="EGF-type_Asp/Asn_hydroxyl_site"/>
</dbReference>
<dbReference type="InterPro" id="IPR018097">
    <property type="entry name" value="EGF_Ca-bd_CS"/>
</dbReference>
<dbReference type="InterPro" id="IPR009030">
    <property type="entry name" value="Growth_fac_rcpt_cys_sf"/>
</dbReference>
<dbReference type="InterPro" id="IPR000998">
    <property type="entry name" value="MAM_dom"/>
</dbReference>
<dbReference type="InterPro" id="IPR052235">
    <property type="entry name" value="Nephronectin_domain"/>
</dbReference>
<dbReference type="InterPro" id="IPR049883">
    <property type="entry name" value="NOTCH1_EGF-like"/>
</dbReference>
<dbReference type="PANTHER" id="PTHR24050:SF24">
    <property type="entry name" value="EPIDERMAL GROWTH FACTOR-LIKE PROTEIN 6"/>
    <property type="match status" value="1"/>
</dbReference>
<dbReference type="PANTHER" id="PTHR24050">
    <property type="entry name" value="PA14 DOMAIN-CONTAINING PROTEIN"/>
    <property type="match status" value="1"/>
</dbReference>
<dbReference type="Pfam" id="PF07645">
    <property type="entry name" value="EGF_CA"/>
    <property type="match status" value="3"/>
</dbReference>
<dbReference type="Pfam" id="PF00629">
    <property type="entry name" value="MAM"/>
    <property type="match status" value="1"/>
</dbReference>
<dbReference type="PRINTS" id="PR00020">
    <property type="entry name" value="MAMDOMAIN"/>
</dbReference>
<dbReference type="SMART" id="SM00181">
    <property type="entry name" value="EGF"/>
    <property type="match status" value="5"/>
</dbReference>
<dbReference type="SMART" id="SM00179">
    <property type="entry name" value="EGF_CA"/>
    <property type="match status" value="3"/>
</dbReference>
<dbReference type="SMART" id="SM00137">
    <property type="entry name" value="MAM"/>
    <property type="match status" value="1"/>
</dbReference>
<dbReference type="SUPFAM" id="SSF49899">
    <property type="entry name" value="Concanavalin A-like lectins/glucanases"/>
    <property type="match status" value="1"/>
</dbReference>
<dbReference type="SUPFAM" id="SSF57196">
    <property type="entry name" value="EGF/Laminin"/>
    <property type="match status" value="1"/>
</dbReference>
<dbReference type="SUPFAM" id="SSF57184">
    <property type="entry name" value="Growth factor receptor domain"/>
    <property type="match status" value="1"/>
</dbReference>
<dbReference type="PROSITE" id="PS00010">
    <property type="entry name" value="ASX_HYDROXYL"/>
    <property type="match status" value="3"/>
</dbReference>
<dbReference type="PROSITE" id="PS00022">
    <property type="entry name" value="EGF_1"/>
    <property type="match status" value="1"/>
</dbReference>
<dbReference type="PROSITE" id="PS01186">
    <property type="entry name" value="EGF_2"/>
    <property type="match status" value="3"/>
</dbReference>
<dbReference type="PROSITE" id="PS50026">
    <property type="entry name" value="EGF_3"/>
    <property type="match status" value="4"/>
</dbReference>
<dbReference type="PROSITE" id="PS01187">
    <property type="entry name" value="EGF_CA"/>
    <property type="match status" value="3"/>
</dbReference>
<dbReference type="PROSITE" id="PS50060">
    <property type="entry name" value="MAM_2"/>
    <property type="match status" value="1"/>
</dbReference>
<protein>
    <recommendedName>
        <fullName>Epidermal growth factor-like protein 6</fullName>
        <shortName>EGF-like protein 6</shortName>
    </recommendedName>
</protein>
<accession>Q8AVH7</accession>
<keyword id="KW-0084">Basement membrane</keyword>
<keyword id="KW-0106">Calcium</keyword>
<keyword id="KW-0130">Cell adhesion</keyword>
<keyword id="KW-0175">Coiled coil</keyword>
<keyword id="KW-0217">Developmental protein</keyword>
<keyword id="KW-0221">Differentiation</keyword>
<keyword id="KW-1015">Disulfide bond</keyword>
<keyword id="KW-0245">EGF-like domain</keyword>
<keyword id="KW-0272">Extracellular matrix</keyword>
<keyword id="KW-1185">Reference proteome</keyword>
<keyword id="KW-0677">Repeat</keyword>
<keyword id="KW-0964">Secreted</keyword>
<keyword id="KW-0732">Signal</keyword>
<evidence type="ECO:0000250" key="1"/>
<evidence type="ECO:0000255" key="2"/>
<evidence type="ECO:0000255" key="3">
    <source>
        <dbReference type="PROSITE-ProRule" id="PRU00076"/>
    </source>
</evidence>
<evidence type="ECO:0000255" key="4">
    <source>
        <dbReference type="PROSITE-ProRule" id="PRU00128"/>
    </source>
</evidence>
<evidence type="ECO:0000256" key="5">
    <source>
        <dbReference type="SAM" id="MobiDB-lite"/>
    </source>
</evidence>
<evidence type="ECO:0000305" key="6"/>
<feature type="signal peptide" evidence="2">
    <location>
        <begin position="1"/>
        <end position="30"/>
    </location>
</feature>
<feature type="chain" id="PRO_0000295813" description="Epidermal growth factor-like protein 6">
    <location>
        <begin position="31"/>
        <end position="544"/>
    </location>
</feature>
<feature type="domain" description="EGF-like 1" evidence="3">
    <location>
        <begin position="63"/>
        <end position="98"/>
    </location>
</feature>
<feature type="domain" description="EGF-like 2; calcium-binding" evidence="3">
    <location>
        <begin position="100"/>
        <end position="139"/>
    </location>
</feature>
<feature type="domain" description="EGF-like 3" evidence="3">
    <location>
        <begin position="144"/>
        <end position="178"/>
    </location>
</feature>
<feature type="domain" description="EGF-like 4; calcium-binding" evidence="3">
    <location>
        <begin position="180"/>
        <end position="218"/>
    </location>
</feature>
<feature type="domain" description="EGF-like 5; calcium-binding" evidence="3">
    <location>
        <begin position="225"/>
        <end position="265"/>
    </location>
</feature>
<feature type="domain" description="MAM" evidence="4">
    <location>
        <begin position="399"/>
        <end position="543"/>
    </location>
</feature>
<feature type="region of interest" description="Disordered" evidence="5">
    <location>
        <begin position="332"/>
        <end position="357"/>
    </location>
</feature>
<feature type="coiled-coil region" evidence="2">
    <location>
        <begin position="333"/>
        <end position="367"/>
    </location>
</feature>
<feature type="compositionally biased region" description="Acidic residues" evidence="5">
    <location>
        <begin position="334"/>
        <end position="357"/>
    </location>
</feature>
<feature type="disulfide bond" evidence="3">
    <location>
        <begin position="67"/>
        <end position="80"/>
    </location>
</feature>
<feature type="disulfide bond" evidence="3">
    <location>
        <begin position="71"/>
        <end position="86"/>
    </location>
</feature>
<feature type="disulfide bond" evidence="3">
    <location>
        <begin position="88"/>
        <end position="97"/>
    </location>
</feature>
<feature type="disulfide bond" evidence="3">
    <location>
        <begin position="104"/>
        <end position="115"/>
    </location>
</feature>
<feature type="disulfide bond" evidence="3">
    <location>
        <begin position="111"/>
        <end position="124"/>
    </location>
</feature>
<feature type="disulfide bond" evidence="3">
    <location>
        <begin position="126"/>
        <end position="138"/>
    </location>
</feature>
<feature type="disulfide bond" evidence="3">
    <location>
        <begin position="184"/>
        <end position="197"/>
    </location>
</feature>
<feature type="disulfide bond" evidence="3">
    <location>
        <begin position="191"/>
        <end position="206"/>
    </location>
</feature>
<feature type="disulfide bond" evidence="3">
    <location>
        <begin position="229"/>
        <end position="242"/>
    </location>
</feature>
<feature type="disulfide bond" evidence="3">
    <location>
        <begin position="236"/>
        <end position="251"/>
    </location>
</feature>
<feature type="disulfide bond" evidence="3">
    <location>
        <begin position="253"/>
        <end position="264"/>
    </location>
</feature>